<proteinExistence type="inferred from homology"/>
<keyword id="KW-0328">Glycosyltransferase</keyword>
<keyword id="KW-0808">Transferase</keyword>
<feature type="chain" id="PRO_1000198645" description="Pyrimidine/purine nucleoside phosphorylase">
    <location>
        <begin position="1"/>
        <end position="108"/>
    </location>
</feature>
<name>PPNP_ACIBY</name>
<organism>
    <name type="scientific">Acinetobacter baumannii (strain AYE)</name>
    <dbReference type="NCBI Taxonomy" id="509173"/>
    <lineage>
        <taxon>Bacteria</taxon>
        <taxon>Pseudomonadati</taxon>
        <taxon>Pseudomonadota</taxon>
        <taxon>Gammaproteobacteria</taxon>
        <taxon>Moraxellales</taxon>
        <taxon>Moraxellaceae</taxon>
        <taxon>Acinetobacter</taxon>
        <taxon>Acinetobacter calcoaceticus/baumannii complex</taxon>
    </lineage>
</organism>
<gene>
    <name evidence="1" type="primary">ppnP</name>
    <name type="ordered locus">ABAYE3451</name>
</gene>
<evidence type="ECO:0000255" key="1">
    <source>
        <dbReference type="HAMAP-Rule" id="MF_01537"/>
    </source>
</evidence>
<accession>B0VE72</accession>
<dbReference type="EC" id="2.4.2.1" evidence="1"/>
<dbReference type="EC" id="2.4.2.2" evidence="1"/>
<dbReference type="EMBL" id="CU459141">
    <property type="protein sequence ID" value="CAM88242.1"/>
    <property type="molecule type" value="Genomic_DNA"/>
</dbReference>
<dbReference type="RefSeq" id="WP_000099685.1">
    <property type="nucleotide sequence ID" value="NZ_JBDGFB010000003.1"/>
</dbReference>
<dbReference type="SMR" id="B0VE72"/>
<dbReference type="EnsemblBacteria" id="CAM88242">
    <property type="protein sequence ID" value="CAM88242"/>
    <property type="gene ID" value="ABAYE3451"/>
</dbReference>
<dbReference type="KEGG" id="aby:ABAYE3451"/>
<dbReference type="HOGENOM" id="CLU_157874_1_0_6"/>
<dbReference type="GO" id="GO:0005829">
    <property type="term" value="C:cytosol"/>
    <property type="evidence" value="ECO:0007669"/>
    <property type="project" value="TreeGrafter"/>
</dbReference>
<dbReference type="GO" id="GO:0047975">
    <property type="term" value="F:guanosine phosphorylase activity"/>
    <property type="evidence" value="ECO:0007669"/>
    <property type="project" value="UniProtKB-EC"/>
</dbReference>
<dbReference type="GO" id="GO:0004731">
    <property type="term" value="F:purine-nucleoside phosphorylase activity"/>
    <property type="evidence" value="ECO:0007669"/>
    <property type="project" value="UniProtKB-UniRule"/>
</dbReference>
<dbReference type="GO" id="GO:0009032">
    <property type="term" value="F:thymidine phosphorylase activity"/>
    <property type="evidence" value="ECO:0007669"/>
    <property type="project" value="UniProtKB-EC"/>
</dbReference>
<dbReference type="GO" id="GO:0004850">
    <property type="term" value="F:uridine phosphorylase activity"/>
    <property type="evidence" value="ECO:0007669"/>
    <property type="project" value="UniProtKB-EC"/>
</dbReference>
<dbReference type="CDD" id="cd20296">
    <property type="entry name" value="cupin_PpnP-like"/>
    <property type="match status" value="1"/>
</dbReference>
<dbReference type="Gene3D" id="2.60.120.10">
    <property type="entry name" value="Jelly Rolls"/>
    <property type="match status" value="1"/>
</dbReference>
<dbReference type="HAMAP" id="MF_01537">
    <property type="entry name" value="Nucleos_phosphorylase_PpnP"/>
    <property type="match status" value="1"/>
</dbReference>
<dbReference type="InterPro" id="IPR009664">
    <property type="entry name" value="Ppnp"/>
</dbReference>
<dbReference type="InterPro" id="IPR014710">
    <property type="entry name" value="RmlC-like_jellyroll"/>
</dbReference>
<dbReference type="InterPro" id="IPR011051">
    <property type="entry name" value="RmlC_Cupin_sf"/>
</dbReference>
<dbReference type="PANTHER" id="PTHR36540">
    <property type="entry name" value="PYRIMIDINE/PURINE NUCLEOSIDE PHOSPHORYLASE"/>
    <property type="match status" value="1"/>
</dbReference>
<dbReference type="PANTHER" id="PTHR36540:SF1">
    <property type="entry name" value="PYRIMIDINE_PURINE NUCLEOSIDE PHOSPHORYLASE"/>
    <property type="match status" value="1"/>
</dbReference>
<dbReference type="Pfam" id="PF06865">
    <property type="entry name" value="Ppnp"/>
    <property type="match status" value="1"/>
</dbReference>
<dbReference type="SUPFAM" id="SSF51182">
    <property type="entry name" value="RmlC-like cupins"/>
    <property type="match status" value="1"/>
</dbReference>
<comment type="function">
    <text evidence="1">Catalyzes the phosphorolysis of diverse nucleosides, yielding D-ribose 1-phosphate and the respective free bases. Can use uridine, adenosine, guanosine, cytidine, thymidine, inosine and xanthosine as substrates. Also catalyzes the reverse reactions.</text>
</comment>
<comment type="catalytic activity">
    <reaction evidence="1">
        <text>a purine D-ribonucleoside + phosphate = a purine nucleobase + alpha-D-ribose 1-phosphate</text>
        <dbReference type="Rhea" id="RHEA:19805"/>
        <dbReference type="ChEBI" id="CHEBI:26386"/>
        <dbReference type="ChEBI" id="CHEBI:43474"/>
        <dbReference type="ChEBI" id="CHEBI:57720"/>
        <dbReference type="ChEBI" id="CHEBI:142355"/>
        <dbReference type="EC" id="2.4.2.1"/>
    </reaction>
</comment>
<comment type="catalytic activity">
    <reaction evidence="1">
        <text>adenosine + phosphate = alpha-D-ribose 1-phosphate + adenine</text>
        <dbReference type="Rhea" id="RHEA:27642"/>
        <dbReference type="ChEBI" id="CHEBI:16335"/>
        <dbReference type="ChEBI" id="CHEBI:16708"/>
        <dbReference type="ChEBI" id="CHEBI:43474"/>
        <dbReference type="ChEBI" id="CHEBI:57720"/>
        <dbReference type="EC" id="2.4.2.1"/>
    </reaction>
</comment>
<comment type="catalytic activity">
    <reaction evidence="1">
        <text>cytidine + phosphate = cytosine + alpha-D-ribose 1-phosphate</text>
        <dbReference type="Rhea" id="RHEA:52540"/>
        <dbReference type="ChEBI" id="CHEBI:16040"/>
        <dbReference type="ChEBI" id="CHEBI:17562"/>
        <dbReference type="ChEBI" id="CHEBI:43474"/>
        <dbReference type="ChEBI" id="CHEBI:57720"/>
        <dbReference type="EC" id="2.4.2.2"/>
    </reaction>
</comment>
<comment type="catalytic activity">
    <reaction evidence="1">
        <text>guanosine + phosphate = alpha-D-ribose 1-phosphate + guanine</text>
        <dbReference type="Rhea" id="RHEA:13233"/>
        <dbReference type="ChEBI" id="CHEBI:16235"/>
        <dbReference type="ChEBI" id="CHEBI:16750"/>
        <dbReference type="ChEBI" id="CHEBI:43474"/>
        <dbReference type="ChEBI" id="CHEBI:57720"/>
        <dbReference type="EC" id="2.4.2.1"/>
    </reaction>
</comment>
<comment type="catalytic activity">
    <reaction evidence="1">
        <text>inosine + phosphate = alpha-D-ribose 1-phosphate + hypoxanthine</text>
        <dbReference type="Rhea" id="RHEA:27646"/>
        <dbReference type="ChEBI" id="CHEBI:17368"/>
        <dbReference type="ChEBI" id="CHEBI:17596"/>
        <dbReference type="ChEBI" id="CHEBI:43474"/>
        <dbReference type="ChEBI" id="CHEBI:57720"/>
        <dbReference type="EC" id="2.4.2.1"/>
    </reaction>
</comment>
<comment type="catalytic activity">
    <reaction evidence="1">
        <text>thymidine + phosphate = 2-deoxy-alpha-D-ribose 1-phosphate + thymine</text>
        <dbReference type="Rhea" id="RHEA:16037"/>
        <dbReference type="ChEBI" id="CHEBI:17748"/>
        <dbReference type="ChEBI" id="CHEBI:17821"/>
        <dbReference type="ChEBI" id="CHEBI:43474"/>
        <dbReference type="ChEBI" id="CHEBI:57259"/>
        <dbReference type="EC" id="2.4.2.2"/>
    </reaction>
</comment>
<comment type="catalytic activity">
    <reaction evidence="1">
        <text>uridine + phosphate = alpha-D-ribose 1-phosphate + uracil</text>
        <dbReference type="Rhea" id="RHEA:24388"/>
        <dbReference type="ChEBI" id="CHEBI:16704"/>
        <dbReference type="ChEBI" id="CHEBI:17568"/>
        <dbReference type="ChEBI" id="CHEBI:43474"/>
        <dbReference type="ChEBI" id="CHEBI:57720"/>
        <dbReference type="EC" id="2.4.2.2"/>
    </reaction>
</comment>
<comment type="catalytic activity">
    <reaction evidence="1">
        <text>xanthosine + phosphate = alpha-D-ribose 1-phosphate + xanthine</text>
        <dbReference type="Rhea" id="RHEA:27638"/>
        <dbReference type="ChEBI" id="CHEBI:17712"/>
        <dbReference type="ChEBI" id="CHEBI:18107"/>
        <dbReference type="ChEBI" id="CHEBI:43474"/>
        <dbReference type="ChEBI" id="CHEBI:57720"/>
        <dbReference type="EC" id="2.4.2.1"/>
    </reaction>
</comment>
<comment type="similarity">
    <text evidence="1">Belongs to the nucleoside phosphorylase PpnP family.</text>
</comment>
<protein>
    <recommendedName>
        <fullName evidence="1">Pyrimidine/purine nucleoside phosphorylase</fullName>
        <ecNumber evidence="1">2.4.2.1</ecNumber>
        <ecNumber evidence="1">2.4.2.2</ecNumber>
    </recommendedName>
    <alternativeName>
        <fullName evidence="1">Adenosine phosphorylase</fullName>
    </alternativeName>
    <alternativeName>
        <fullName evidence="1">Cytidine phosphorylase</fullName>
    </alternativeName>
    <alternativeName>
        <fullName evidence="1">Guanosine phosphorylase</fullName>
    </alternativeName>
    <alternativeName>
        <fullName evidence="1">Inosine phosphorylase</fullName>
    </alternativeName>
    <alternativeName>
        <fullName evidence="1">Thymidine phosphorylase</fullName>
    </alternativeName>
    <alternativeName>
        <fullName evidence="1">Uridine phosphorylase</fullName>
    </alternativeName>
    <alternativeName>
        <fullName evidence="1">Xanthosine phosphorylase</fullName>
    </alternativeName>
</protein>
<reference key="1">
    <citation type="journal article" date="2008" name="PLoS ONE">
        <title>Comparative analysis of Acinetobacters: three genomes for three lifestyles.</title>
        <authorList>
            <person name="Vallenet D."/>
            <person name="Nordmann P."/>
            <person name="Barbe V."/>
            <person name="Poirel L."/>
            <person name="Mangenot S."/>
            <person name="Bataille E."/>
            <person name="Dossat C."/>
            <person name="Gas S."/>
            <person name="Kreimeyer A."/>
            <person name="Lenoble P."/>
            <person name="Oztas S."/>
            <person name="Poulain J."/>
            <person name="Segurens B."/>
            <person name="Robert C."/>
            <person name="Abergel C."/>
            <person name="Claverie J.-M."/>
            <person name="Raoult D."/>
            <person name="Medigue C."/>
            <person name="Weissenbach J."/>
            <person name="Cruveiller S."/>
        </authorList>
    </citation>
    <scope>NUCLEOTIDE SEQUENCE [LARGE SCALE GENOMIC DNA]</scope>
    <source>
        <strain>AYE</strain>
    </source>
</reference>
<sequence>MSSTQFDHVTVIKKSNVYFGGACISHTVQFEDGTKKTLGVILPTEQPLTFETHVPERMEIISGECRVKIADSNESELFRAGQSFYVPGNSVFKIETDEVLDYVCHLEG</sequence>